<reference key="1">
    <citation type="journal article" date="2005" name="Nature">
        <title>The map-based sequence of the rice genome.</title>
        <authorList>
            <consortium name="International rice genome sequencing project (IRGSP)"/>
        </authorList>
    </citation>
    <scope>NUCLEOTIDE SEQUENCE [LARGE SCALE GENOMIC DNA]</scope>
    <source>
        <strain>cv. Nipponbare</strain>
    </source>
</reference>
<reference key="2">
    <citation type="journal article" date="2013" name="Rice">
        <title>Improvement of the Oryza sativa Nipponbare reference genome using next generation sequence and optical map data.</title>
        <authorList>
            <person name="Kawahara Y."/>
            <person name="de la Bastide M."/>
            <person name="Hamilton J.P."/>
            <person name="Kanamori H."/>
            <person name="McCombie W.R."/>
            <person name="Ouyang S."/>
            <person name="Schwartz D.C."/>
            <person name="Tanaka T."/>
            <person name="Wu J."/>
            <person name="Zhou S."/>
            <person name="Childs K.L."/>
            <person name="Davidson R.M."/>
            <person name="Lin H."/>
            <person name="Quesada-Ocampo L."/>
            <person name="Vaillancourt B."/>
            <person name="Sakai H."/>
            <person name="Lee S.S."/>
            <person name="Kim J."/>
            <person name="Numa H."/>
            <person name="Itoh T."/>
            <person name="Buell C.R."/>
            <person name="Matsumoto T."/>
        </authorList>
    </citation>
    <scope>GENOME REANNOTATION</scope>
    <source>
        <strain>cv. Nipponbare</strain>
    </source>
</reference>
<evidence type="ECO:0000255" key="1">
    <source>
        <dbReference type="PROSITE-ProRule" id="PRU00718"/>
    </source>
</evidence>
<evidence type="ECO:0000256" key="2">
    <source>
        <dbReference type="SAM" id="MobiDB-lite"/>
    </source>
</evidence>
<evidence type="ECO:0000305" key="3"/>
<proteinExistence type="inferred from homology"/>
<gene>
    <name type="ordered locus">Os07g0281700</name>
    <name type="ordered locus">Os07g0281800</name>
    <name type="ordered locus">LOC_Os07g18120</name>
    <name type="ORF">P0557D09.31</name>
</gene>
<feature type="chain" id="PRO_0000247648" description="Putative aldehyde oxidase-like protein">
    <location>
        <begin position="1"/>
        <end position="1342"/>
    </location>
</feature>
<feature type="domain" description="FAD-binding PCMH-type" evidence="1">
    <location>
        <begin position="221"/>
        <end position="408"/>
    </location>
</feature>
<feature type="region of interest" description="Disordered" evidence="2">
    <location>
        <begin position="1"/>
        <end position="23"/>
    </location>
</feature>
<protein>
    <recommendedName>
        <fullName>Putative aldehyde oxidase-like protein</fullName>
    </recommendedName>
</protein>
<keyword id="KW-1185">Reference proteome</keyword>
<dbReference type="EMBL" id="AP005260">
    <property type="protein sequence ID" value="BAC84232.1"/>
    <property type="molecule type" value="Genomic_DNA"/>
</dbReference>
<dbReference type="EMBL" id="AP014963">
    <property type="status" value="NOT_ANNOTATED_CDS"/>
    <property type="molecule type" value="Genomic_DNA"/>
</dbReference>
<dbReference type="SMR" id="Q6Z351"/>
<dbReference type="FunCoup" id="Q6Z351">
    <property type="interactions" value="6"/>
</dbReference>
<dbReference type="STRING" id="39947.Q6Z351"/>
<dbReference type="PaxDb" id="39947-Q6Z351"/>
<dbReference type="InParanoid" id="Q6Z351"/>
<dbReference type="PlantReactome" id="R-OSA-1119374">
    <property type="pathway name" value="Abscisic acid biosynthesis"/>
</dbReference>
<dbReference type="PlantReactome" id="R-OSA-1119486">
    <property type="pathway name" value="IAA biosynthesis I"/>
</dbReference>
<dbReference type="Proteomes" id="UP000000763">
    <property type="component" value="Chromosome 7"/>
</dbReference>
<dbReference type="Proteomes" id="UP000059680">
    <property type="component" value="Chromosome 7"/>
</dbReference>
<dbReference type="GO" id="GO:0071949">
    <property type="term" value="F:FAD binding"/>
    <property type="evidence" value="ECO:0007669"/>
    <property type="project" value="InterPro"/>
</dbReference>
<dbReference type="GO" id="GO:0005506">
    <property type="term" value="F:iron ion binding"/>
    <property type="evidence" value="ECO:0007669"/>
    <property type="project" value="InterPro"/>
</dbReference>
<dbReference type="GO" id="GO:0051536">
    <property type="term" value="F:iron-sulfur cluster binding"/>
    <property type="evidence" value="ECO:0007669"/>
    <property type="project" value="InterPro"/>
</dbReference>
<dbReference type="GO" id="GO:0016491">
    <property type="term" value="F:oxidoreductase activity"/>
    <property type="evidence" value="ECO:0000318"/>
    <property type="project" value="GO_Central"/>
</dbReference>
<dbReference type="FunFam" id="1.10.150.120:FF:000006">
    <property type="entry name" value="Aldehyde oxidase"/>
    <property type="match status" value="1"/>
</dbReference>
<dbReference type="FunFam" id="3.30.390.50:FF:000003">
    <property type="entry name" value="Aldehyde oxidase1"/>
    <property type="match status" value="1"/>
</dbReference>
<dbReference type="FunFam" id="3.30.365.10:FF:000001">
    <property type="entry name" value="Xanthine dehydrogenase oxidase"/>
    <property type="match status" value="1"/>
</dbReference>
<dbReference type="Gene3D" id="3.10.20.30">
    <property type="match status" value="1"/>
</dbReference>
<dbReference type="Gene3D" id="3.30.465.10">
    <property type="match status" value="1"/>
</dbReference>
<dbReference type="Gene3D" id="1.10.150.120">
    <property type="entry name" value="[2Fe-2S]-binding domain"/>
    <property type="match status" value="1"/>
</dbReference>
<dbReference type="Gene3D" id="3.90.1170.50">
    <property type="entry name" value="Aldehyde oxidase/xanthine dehydrogenase, a/b hammerhead"/>
    <property type="match status" value="1"/>
</dbReference>
<dbReference type="Gene3D" id="3.30.365.10">
    <property type="entry name" value="Aldehyde oxidase/xanthine dehydrogenase, molybdopterin binding domain"/>
    <property type="match status" value="4"/>
</dbReference>
<dbReference type="Gene3D" id="3.30.390.50">
    <property type="entry name" value="CO dehydrogenase flavoprotein, C-terminal domain"/>
    <property type="match status" value="1"/>
</dbReference>
<dbReference type="InterPro" id="IPR002888">
    <property type="entry name" value="2Fe-2S-bd"/>
</dbReference>
<dbReference type="InterPro" id="IPR036884">
    <property type="entry name" value="2Fe-2S-bd_dom_sf"/>
</dbReference>
<dbReference type="InterPro" id="IPR036010">
    <property type="entry name" value="2Fe-2S_ferredoxin-like_sf"/>
</dbReference>
<dbReference type="InterPro" id="IPR000674">
    <property type="entry name" value="Ald_Oxase/Xan_DH_a/b"/>
</dbReference>
<dbReference type="InterPro" id="IPR036856">
    <property type="entry name" value="Ald_Oxase/Xan_DH_a/b_sf"/>
</dbReference>
<dbReference type="InterPro" id="IPR016208">
    <property type="entry name" value="Ald_Oxase/xanthine_DH-like"/>
</dbReference>
<dbReference type="InterPro" id="IPR008274">
    <property type="entry name" value="AldOxase/xan_DH_MoCoBD1"/>
</dbReference>
<dbReference type="InterPro" id="IPR046867">
    <property type="entry name" value="AldOxase/xan_DH_MoCoBD2"/>
</dbReference>
<dbReference type="InterPro" id="IPR037165">
    <property type="entry name" value="AldOxase/xan_DH_Mopterin-bd_sf"/>
</dbReference>
<dbReference type="InterPro" id="IPR012675">
    <property type="entry name" value="Beta-grasp_dom_sf"/>
</dbReference>
<dbReference type="InterPro" id="IPR005107">
    <property type="entry name" value="CO_DH_flav_C"/>
</dbReference>
<dbReference type="InterPro" id="IPR036683">
    <property type="entry name" value="CO_DH_flav_C_dom_sf"/>
</dbReference>
<dbReference type="InterPro" id="IPR016166">
    <property type="entry name" value="FAD-bd_PCMH"/>
</dbReference>
<dbReference type="InterPro" id="IPR036318">
    <property type="entry name" value="FAD-bd_PCMH-like_sf"/>
</dbReference>
<dbReference type="InterPro" id="IPR016169">
    <property type="entry name" value="FAD-bd_PCMH_sub2"/>
</dbReference>
<dbReference type="InterPro" id="IPR002346">
    <property type="entry name" value="Mopterin_DH_FAD-bd"/>
</dbReference>
<dbReference type="PANTHER" id="PTHR11908:SF89">
    <property type="entry name" value="ALDEHYDE OXIDASE-LIKE PROTEIN-RELATED"/>
    <property type="match status" value="1"/>
</dbReference>
<dbReference type="PANTHER" id="PTHR11908">
    <property type="entry name" value="XANTHINE DEHYDROGENASE"/>
    <property type="match status" value="1"/>
</dbReference>
<dbReference type="Pfam" id="PF01315">
    <property type="entry name" value="Ald_Xan_dh_C"/>
    <property type="match status" value="1"/>
</dbReference>
<dbReference type="Pfam" id="PF03450">
    <property type="entry name" value="CO_deh_flav_C"/>
    <property type="match status" value="1"/>
</dbReference>
<dbReference type="Pfam" id="PF00941">
    <property type="entry name" value="FAD_binding_5"/>
    <property type="match status" value="1"/>
</dbReference>
<dbReference type="Pfam" id="PF01799">
    <property type="entry name" value="Fer2_2"/>
    <property type="match status" value="1"/>
</dbReference>
<dbReference type="Pfam" id="PF02738">
    <property type="entry name" value="MoCoBD_1"/>
    <property type="match status" value="1"/>
</dbReference>
<dbReference type="Pfam" id="PF20256">
    <property type="entry name" value="MoCoBD_2"/>
    <property type="match status" value="1"/>
</dbReference>
<dbReference type="PIRSF" id="PIRSF000127">
    <property type="entry name" value="Xanthine_DH"/>
    <property type="match status" value="1"/>
</dbReference>
<dbReference type="SMART" id="SM01008">
    <property type="entry name" value="Ald_Xan_dh_C"/>
    <property type="match status" value="1"/>
</dbReference>
<dbReference type="SMART" id="SM01092">
    <property type="entry name" value="CO_deh_flav_C"/>
    <property type="match status" value="1"/>
</dbReference>
<dbReference type="SUPFAM" id="SSF54292">
    <property type="entry name" value="2Fe-2S ferredoxin-like"/>
    <property type="match status" value="1"/>
</dbReference>
<dbReference type="SUPFAM" id="SSF55447">
    <property type="entry name" value="CO dehydrogenase flavoprotein C-terminal domain-like"/>
    <property type="match status" value="1"/>
</dbReference>
<dbReference type="SUPFAM" id="SSF47741">
    <property type="entry name" value="CO dehydrogenase ISP C-domain like"/>
    <property type="match status" value="1"/>
</dbReference>
<dbReference type="SUPFAM" id="SSF54665">
    <property type="entry name" value="CO dehydrogenase molybdoprotein N-domain-like"/>
    <property type="match status" value="1"/>
</dbReference>
<dbReference type="SUPFAM" id="SSF56176">
    <property type="entry name" value="FAD-binding/transporter-associated domain-like"/>
    <property type="match status" value="1"/>
</dbReference>
<dbReference type="SUPFAM" id="SSF56003">
    <property type="entry name" value="Molybdenum cofactor-binding domain"/>
    <property type="match status" value="1"/>
</dbReference>
<dbReference type="PROSITE" id="PS51387">
    <property type="entry name" value="FAD_PCMH"/>
    <property type="match status" value="1"/>
</dbReference>
<accession>Q6Z351</accession>
<comment type="similarity">
    <text evidence="3">Belongs to the xanthine dehydrogenase family.</text>
</comment>
<name>ALDOL_ORYSJ</name>
<sequence>MSDCNSGGGERRPNARATDAPPVRAPSGGAFRCRGCGACVILIAKYNPKTDEVTEFNASSCLTLLYSIHFCSIITTEGLGNTKDGFHAIQKRMSGFHASQCGFCTPGMCMSIFSSLVNADKSKKPDPPKGFSKLSVSEAERSFSGNMCRCTGYRPIVDACKSFASDVDLEDLGLNIFWKKGDKHPDPTKLPSYTLGGGICTFPDFLKSEIKSSIDFNDASISSPREGWYCPKNIKQYYKLVNSGLFSESSVKVVVGNTSTGVYKDQDLYDKYIDIAGIPELSAIVRKDKGIEIGAATSISRTIEILNQESESTSSPNGSVVFRKLAEHMSKVASPFVRNTASIGGNIILAHKYPFRSDIATILLGAAATVNLQVSSKTLHVTLEQFLEQPPLGHNTLLLSIFIPHWASDCKKEHTLVFETYRAAPRPLGNAVSYVNSAFLGHVSLDKSSGDNILSNLHLAFGAYGTEHAIRARKVEEYLTGKILSASVVLEAIRLLRETIVPVEGTTHPEYRVSVAVGFLFSFLSPLCKGVIEPGKTLSISEDLVHTDNVHNMPLSSRRETLSGDEYKPVGDPIKKYKVELQASGEAIYVDDIPAPKNCLYGEFIYSTQPLANVKSIKFKPSLASKKILTVVSAKDIPTGGRNIGSTFLFGDEEPLFGDPIAEFAGQALGVVIAETQRYADMAAKQAVVEYTTDGLKAPILTVEQAVQNNSYFQVPPERAPKQVGDFSKGMAEADHKIMSEEVKLASQYYFYMETQTALAIPDEDNTMTVYSSSQFPELAQNVISKCLGIPFNNVRVITRRAGGGFGGKAVRSLHIATAAALCAHTLRRPVRMYLNRNTDMIMVGGRHPMKARYSVGFKSDGKITALHLDLLINAGISADASPVIPGTIISGLKKYNWGALSFDVKLCKTNNTSKSVMRAPGDTQGSFIAEAIIEHVAAILSLDANTVRQKNFHTYDSLVLFYPDSAGESSTYTLHSIFDRLASTSRYLQRVESIKKFNSTNKWRKRGISSVPLIFKVEPRPAPGRVSVLNDGSIVVEVGGVELGQGLWTKVQQMTAFALGQLWPKGCEGLLDRIRVLQSDTLNLIQGGLTAGSTTSESSCAATLQACNMLIERLKPVMERLQLQSDTVSWDTLISQASQENINLSASAYWVPEQDSNFYLNYGAGTSEVEVDLLTGAITIIRSDLIYDCGKSLNPAVDLGQIEGSFIQGIGFFIYEEHQTNSDGLVISNSTWDYKIPSVDTIPKQFNAEVLNTGYHKHRVLSSKASGEPAVVLGASVHCAVREAIRAARIEFAGNNGSGSSLLTFQLDVPAPMTVVKELCGLDIVEKYLEDLSNRGAASGN</sequence>
<organism>
    <name type="scientific">Oryza sativa subsp. japonica</name>
    <name type="common">Rice</name>
    <dbReference type="NCBI Taxonomy" id="39947"/>
    <lineage>
        <taxon>Eukaryota</taxon>
        <taxon>Viridiplantae</taxon>
        <taxon>Streptophyta</taxon>
        <taxon>Embryophyta</taxon>
        <taxon>Tracheophyta</taxon>
        <taxon>Spermatophyta</taxon>
        <taxon>Magnoliopsida</taxon>
        <taxon>Liliopsida</taxon>
        <taxon>Poales</taxon>
        <taxon>Poaceae</taxon>
        <taxon>BOP clade</taxon>
        <taxon>Oryzoideae</taxon>
        <taxon>Oryzeae</taxon>
        <taxon>Oryzinae</taxon>
        <taxon>Oryza</taxon>
        <taxon>Oryza sativa</taxon>
    </lineage>
</organism>